<feature type="chain" id="PRO_0000419491" description="Serine/threonine-protein kinase PknG">
    <location>
        <begin position="1"/>
        <end position="760"/>
    </location>
</feature>
<feature type="domain" description="Protein kinase" evidence="1">
    <location>
        <begin position="161"/>
        <end position="403"/>
    </location>
</feature>
<feature type="region of interest" description="Disordered" evidence="3">
    <location>
        <begin position="1"/>
        <end position="31"/>
    </location>
</feature>
<feature type="active site" description="Proton acceptor" evidence="1 2">
    <location>
        <position position="286"/>
    </location>
</feature>
<feature type="binding site" evidence="1">
    <location>
        <begin position="167"/>
        <end position="175"/>
    </location>
    <ligand>
        <name>ATP</name>
        <dbReference type="ChEBI" id="CHEBI:30616"/>
    </ligand>
</feature>
<feature type="binding site" evidence="1">
    <location>
        <position position="191"/>
    </location>
    <ligand>
        <name>ATP</name>
        <dbReference type="ChEBI" id="CHEBI:30616"/>
    </ligand>
</feature>
<protein>
    <recommendedName>
        <fullName>Serine/threonine-protein kinase PknG</fullName>
        <ecNumber>2.7.11.1</ecNumber>
    </recommendedName>
</protein>
<organism>
    <name type="scientific">Mycolicibacterium smegmatis (strain ATCC 700084 / mc(2)155)</name>
    <name type="common">Mycobacterium smegmatis</name>
    <dbReference type="NCBI Taxonomy" id="246196"/>
    <lineage>
        <taxon>Bacteria</taxon>
        <taxon>Bacillati</taxon>
        <taxon>Actinomycetota</taxon>
        <taxon>Actinomycetes</taxon>
        <taxon>Mycobacteriales</taxon>
        <taxon>Mycobacteriaceae</taxon>
        <taxon>Mycolicibacterium</taxon>
    </lineage>
</organism>
<evidence type="ECO:0000255" key="1">
    <source>
        <dbReference type="PROSITE-ProRule" id="PRU00159"/>
    </source>
</evidence>
<evidence type="ECO:0000255" key="2">
    <source>
        <dbReference type="PROSITE-ProRule" id="PRU10027"/>
    </source>
</evidence>
<evidence type="ECO:0000256" key="3">
    <source>
        <dbReference type="SAM" id="MobiDB-lite"/>
    </source>
</evidence>
<evidence type="ECO:0000269" key="4">
    <source>
    </source>
</evidence>
<evidence type="ECO:0000269" key="5">
    <source>
    </source>
</evidence>
<evidence type="ECO:0000305" key="6">
    <source>
    </source>
</evidence>
<proteinExistence type="evidence at protein level"/>
<sequence>MTSPENPDLPDADDAYVDSGPGTQPASLEDLDMDSASTMRPMATQAVYRPEFDDTDGTSRGTVVTEAYDQVTMATRALSPMRRLGGGLVEIPRVPERDPLTALMTNPVVAESKRFCWNCGKPVGRSTPDGRALSEGWCPHCGSPYSFLPQLSPGDIVADQYEIKGCIAHGGLGWVYLAFDKNVNDRPVVLKGLVHSGDAEAQAIAMAERQFLAEVTHPGIVKIYNFVEHEDKHGNPVGYIVMEYVGGTSLKQARGAKLPVAEAIGYMLEILPALGYLHSIGLAYNDLKPENIMITEEQLKLIDLGAVSRLNSYGYLYGTPGYQAPEIVRTGPTVATDIYTVGRTLAALTLSLRTRRGRYVDGLPSDDPVLETYDSYHRLLRRAIDPDPRRRFTSAEEMSSQLLGVLREVVATDTGVPRPGLSTVFSPSRSTFGVDLLVAHTDVYVDGQVHSEKLTAQEIVRALPVPLVDRTDVGAPMLVASVLSEPVHTLDQLRAARHGALDTEGIDLNESVELPLMEVRALLDLGDVAKATRKLEDLAARVGWRWRLVWFKAVSEMLSADYDSATKHFTEVLDTLPGELAPKLALAATAELAGTADELKFYKTVWSTDNGVISAGFGLARAQSVAGERDMAVQTLDEVPPTSRHFTTARLTSAVTLLSGRSTSEITEQHIRDAARRVEALPDSEPRVLQIRALVLGTALDWLADNTASSNHILGFPFTEHGLKLGVEASLRALARIAPTQSHRYALVDLANSVRPMSTF</sequence>
<gene>
    <name type="primary">pknG</name>
    <name type="ordered locus">MSMEG_0786</name>
    <name type="ordered locus">MSMEI_0770</name>
</gene>
<comment type="catalytic activity">
    <reaction evidence="5">
        <text>L-seryl-[protein] + ATP = O-phospho-L-seryl-[protein] + ADP + H(+)</text>
        <dbReference type="Rhea" id="RHEA:17989"/>
        <dbReference type="Rhea" id="RHEA-COMP:9863"/>
        <dbReference type="Rhea" id="RHEA-COMP:11604"/>
        <dbReference type="ChEBI" id="CHEBI:15378"/>
        <dbReference type="ChEBI" id="CHEBI:29999"/>
        <dbReference type="ChEBI" id="CHEBI:30616"/>
        <dbReference type="ChEBI" id="CHEBI:83421"/>
        <dbReference type="ChEBI" id="CHEBI:456216"/>
        <dbReference type="EC" id="2.7.11.1"/>
    </reaction>
</comment>
<comment type="catalytic activity">
    <reaction evidence="5">
        <text>L-threonyl-[protein] + ATP = O-phospho-L-threonyl-[protein] + ADP + H(+)</text>
        <dbReference type="Rhea" id="RHEA:46608"/>
        <dbReference type="Rhea" id="RHEA-COMP:11060"/>
        <dbReference type="Rhea" id="RHEA-COMP:11605"/>
        <dbReference type="ChEBI" id="CHEBI:15378"/>
        <dbReference type="ChEBI" id="CHEBI:30013"/>
        <dbReference type="ChEBI" id="CHEBI:30616"/>
        <dbReference type="ChEBI" id="CHEBI:61977"/>
        <dbReference type="ChEBI" id="CHEBI:456216"/>
        <dbReference type="EC" id="2.7.11.1"/>
    </reaction>
</comment>
<comment type="subunit">
    <text evidence="4">Interacts with GarA in vitro.</text>
</comment>
<comment type="miscellaneous">
    <text evidence="6">When artificially expressed from expression vectors, encodes an active kinase, which is able to block the lysosomal delivery of mycobacteria inside macrophages. However, while PknG transcripts are found in M.smegmatis, expression of PknG is blocked on a translational level in this non-pathogenic species. This lack of efficient translation is caused by regulatory elements in the upstream region of the gene (PubMed:19210624).</text>
</comment>
<comment type="similarity">
    <text evidence="1">Belongs to the protein kinase superfamily. Ser/Thr protein kinase family.</text>
</comment>
<accession>A0QQK3</accession>
<keyword id="KW-0067">ATP-binding</keyword>
<keyword id="KW-0418">Kinase</keyword>
<keyword id="KW-0547">Nucleotide-binding</keyword>
<keyword id="KW-1185">Reference proteome</keyword>
<keyword id="KW-0723">Serine/threonine-protein kinase</keyword>
<keyword id="KW-0808">Transferase</keyword>
<name>PKNG_MYCS2</name>
<dbReference type="EC" id="2.7.11.1"/>
<dbReference type="EMBL" id="CP000480">
    <property type="protein sequence ID" value="ABK71095.1"/>
    <property type="molecule type" value="Genomic_DNA"/>
</dbReference>
<dbReference type="EMBL" id="CP001663">
    <property type="protein sequence ID" value="AFP37250.1"/>
    <property type="molecule type" value="Genomic_DNA"/>
</dbReference>
<dbReference type="RefSeq" id="WP_011727190.1">
    <property type="nucleotide sequence ID" value="NZ_SIJM01000036.1"/>
</dbReference>
<dbReference type="RefSeq" id="YP_885191.1">
    <property type="nucleotide sequence ID" value="NC_008596.1"/>
</dbReference>
<dbReference type="SMR" id="A0QQK3"/>
<dbReference type="IntAct" id="A0QQK3">
    <property type="interactions" value="1"/>
</dbReference>
<dbReference type="STRING" id="246196.MSMEG_0786"/>
<dbReference type="PaxDb" id="246196-MSMEI_0770"/>
<dbReference type="KEGG" id="msb:LJ00_03905"/>
<dbReference type="KEGG" id="msg:MSMEI_0770"/>
<dbReference type="KEGG" id="msm:MSMEG_0786"/>
<dbReference type="PATRIC" id="fig|246196.19.peg.781"/>
<dbReference type="eggNOG" id="COG0515">
    <property type="taxonomic scope" value="Bacteria"/>
</dbReference>
<dbReference type="OrthoDB" id="137117at2"/>
<dbReference type="Proteomes" id="UP000000757">
    <property type="component" value="Chromosome"/>
</dbReference>
<dbReference type="Proteomes" id="UP000006158">
    <property type="component" value="Chromosome"/>
</dbReference>
<dbReference type="GO" id="GO:0005524">
    <property type="term" value="F:ATP binding"/>
    <property type="evidence" value="ECO:0007669"/>
    <property type="project" value="UniProtKB-KW"/>
</dbReference>
<dbReference type="GO" id="GO:0106310">
    <property type="term" value="F:protein serine kinase activity"/>
    <property type="evidence" value="ECO:0007669"/>
    <property type="project" value="RHEA"/>
</dbReference>
<dbReference type="GO" id="GO:0004674">
    <property type="term" value="F:protein serine/threonine kinase activity"/>
    <property type="evidence" value="ECO:0007669"/>
    <property type="project" value="UniProtKB-KW"/>
</dbReference>
<dbReference type="GO" id="GO:0019222">
    <property type="term" value="P:regulation of metabolic process"/>
    <property type="evidence" value="ECO:0007669"/>
    <property type="project" value="UniProtKB-ARBA"/>
</dbReference>
<dbReference type="CDD" id="cd14014">
    <property type="entry name" value="STKc_PknB_like"/>
    <property type="match status" value="1"/>
</dbReference>
<dbReference type="FunFam" id="1.10.510.10:FF:000306">
    <property type="entry name" value="Serine/threonine protein kinase"/>
    <property type="match status" value="1"/>
</dbReference>
<dbReference type="FunFam" id="1.25.40.10:FF:000318">
    <property type="entry name" value="Serine/threonine protein kinase"/>
    <property type="match status" value="1"/>
</dbReference>
<dbReference type="FunFam" id="3.30.200.20:FF:000205">
    <property type="entry name" value="Serine/threonine protein kinase"/>
    <property type="match status" value="1"/>
</dbReference>
<dbReference type="Gene3D" id="3.30.200.20">
    <property type="entry name" value="Phosphorylase Kinase, domain 1"/>
    <property type="match status" value="1"/>
</dbReference>
<dbReference type="Gene3D" id="1.25.40.10">
    <property type="entry name" value="Tetratricopeptide repeat domain"/>
    <property type="match status" value="2"/>
</dbReference>
<dbReference type="Gene3D" id="1.10.510.10">
    <property type="entry name" value="Transferase(Phosphotransferase) domain 1"/>
    <property type="match status" value="1"/>
</dbReference>
<dbReference type="InterPro" id="IPR011009">
    <property type="entry name" value="Kinase-like_dom_sf"/>
</dbReference>
<dbReference type="InterPro" id="IPR031634">
    <property type="entry name" value="PknG_rubred"/>
</dbReference>
<dbReference type="InterPro" id="IPR031636">
    <property type="entry name" value="PknG_TPR"/>
</dbReference>
<dbReference type="InterPro" id="IPR000719">
    <property type="entry name" value="Prot_kinase_dom"/>
</dbReference>
<dbReference type="InterPro" id="IPR008271">
    <property type="entry name" value="Ser/Thr_kinase_AS"/>
</dbReference>
<dbReference type="InterPro" id="IPR011990">
    <property type="entry name" value="TPR-like_helical_dom_sf"/>
</dbReference>
<dbReference type="PANTHER" id="PTHR24363">
    <property type="entry name" value="SERINE/THREONINE PROTEIN KINASE"/>
    <property type="match status" value="1"/>
</dbReference>
<dbReference type="PANTHER" id="PTHR24363:SF0">
    <property type="entry name" value="SERINE_THREONINE KINASE LIKE DOMAIN CONTAINING 1"/>
    <property type="match status" value="1"/>
</dbReference>
<dbReference type="Pfam" id="PF00069">
    <property type="entry name" value="Pkinase"/>
    <property type="match status" value="1"/>
</dbReference>
<dbReference type="Pfam" id="PF16919">
    <property type="entry name" value="PknG_rubred"/>
    <property type="match status" value="1"/>
</dbReference>
<dbReference type="Pfam" id="PF16918">
    <property type="entry name" value="PknG_TPR"/>
    <property type="match status" value="1"/>
</dbReference>
<dbReference type="SMART" id="SM00220">
    <property type="entry name" value="S_TKc"/>
    <property type="match status" value="1"/>
</dbReference>
<dbReference type="SUPFAM" id="SSF56112">
    <property type="entry name" value="Protein kinase-like (PK-like)"/>
    <property type="match status" value="1"/>
</dbReference>
<dbReference type="PROSITE" id="PS50011">
    <property type="entry name" value="PROTEIN_KINASE_DOM"/>
    <property type="match status" value="1"/>
</dbReference>
<dbReference type="PROSITE" id="PS00108">
    <property type="entry name" value="PROTEIN_KINASE_ST"/>
    <property type="match status" value="1"/>
</dbReference>
<reference key="1">
    <citation type="submission" date="2006-10" db="EMBL/GenBank/DDBJ databases">
        <authorList>
            <person name="Fleischmann R.D."/>
            <person name="Dodson R.J."/>
            <person name="Haft D.H."/>
            <person name="Merkel J.S."/>
            <person name="Nelson W.C."/>
            <person name="Fraser C.M."/>
        </authorList>
    </citation>
    <scope>NUCLEOTIDE SEQUENCE [LARGE SCALE GENOMIC DNA]</scope>
    <source>
        <strain>ATCC 700084 / mc(2)155</strain>
    </source>
</reference>
<reference key="2">
    <citation type="journal article" date="2007" name="Genome Biol.">
        <title>Interrupted coding sequences in Mycobacterium smegmatis: authentic mutations or sequencing errors?</title>
        <authorList>
            <person name="Deshayes C."/>
            <person name="Perrodou E."/>
            <person name="Gallien S."/>
            <person name="Euphrasie D."/>
            <person name="Schaeffer C."/>
            <person name="Van-Dorsselaer A."/>
            <person name="Poch O."/>
            <person name="Lecompte O."/>
            <person name="Reyrat J.-M."/>
        </authorList>
    </citation>
    <scope>NUCLEOTIDE SEQUENCE [LARGE SCALE GENOMIC DNA]</scope>
    <source>
        <strain>ATCC 700084 / mc(2)155</strain>
    </source>
</reference>
<reference key="3">
    <citation type="journal article" date="2009" name="Genome Res.">
        <title>Ortho-proteogenomics: multiple proteomes investigation through orthology and a new MS-based protocol.</title>
        <authorList>
            <person name="Gallien S."/>
            <person name="Perrodou E."/>
            <person name="Carapito C."/>
            <person name="Deshayes C."/>
            <person name="Reyrat J.-M."/>
            <person name="Van Dorsselaer A."/>
            <person name="Poch O."/>
            <person name="Schaeffer C."/>
            <person name="Lecompte O."/>
        </authorList>
    </citation>
    <scope>NUCLEOTIDE SEQUENCE [LARGE SCALE GENOMIC DNA]</scope>
    <source>
        <strain>ATCC 700084 / mc(2)155</strain>
    </source>
</reference>
<reference key="4">
    <citation type="journal article" date="2008" name="Mol. Microbiol.">
        <title>Regulation of glutamate metabolism by protein kinases in mycobacteria.</title>
        <authorList>
            <person name="O'Hare H.M."/>
            <person name="Duran R."/>
            <person name="Cervenansky C."/>
            <person name="Bellinzoni M."/>
            <person name="Wehenkel A.M."/>
            <person name="Pritsch O."/>
            <person name="Obal G."/>
            <person name="Baumgartner J."/>
            <person name="Vialaret J."/>
            <person name="Johnsson K."/>
            <person name="Alzari P.M."/>
        </authorList>
    </citation>
    <scope>INTERACTION WITH GARA</scope>
    <source>
        <strain>ATCC 700084 / mc(2)155</strain>
    </source>
</reference>
<reference key="5">
    <citation type="journal article" date="2009" name="Mol. Microbiol.">
        <title>Differential expression of a virulence factor in pathogenic and non-pathogenic mycobacteria.</title>
        <authorList>
            <person name="Houben E.N."/>
            <person name="Walburger A."/>
            <person name="Ferrari G."/>
            <person name="Nguyen L."/>
            <person name="Thompson C.J."/>
            <person name="Miess C."/>
            <person name="Vogel G."/>
            <person name="Mueller B."/>
            <person name="Pieters J."/>
        </authorList>
    </citation>
    <scope>CATALYTIC ACTIVITY</scope>
    <scope>LACK OF TRANSLATION IN VIVO</scope>
    <source>
        <strain>ATCC 700084 / mc(2)155</strain>
    </source>
</reference>